<feature type="chain" id="PRO_0000101840" description="HVA22-like protein f">
    <location>
        <begin position="1"/>
        <end position="158"/>
    </location>
</feature>
<feature type="transmembrane region" description="Helical" evidence="1">
    <location>
        <begin position="2"/>
        <end position="22"/>
    </location>
</feature>
<feature type="transmembrane region" description="Helical" evidence="1">
    <location>
        <begin position="41"/>
        <end position="61"/>
    </location>
</feature>
<feature type="transmembrane region" description="Helical" evidence="1">
    <location>
        <begin position="63"/>
        <end position="83"/>
    </location>
</feature>
<reference key="1">
    <citation type="journal article" date="1999" name="Nature">
        <title>Sequence and analysis of chromosome 2 of the plant Arabidopsis thaliana.</title>
        <authorList>
            <person name="Lin X."/>
            <person name="Kaul S."/>
            <person name="Rounsley S.D."/>
            <person name="Shea T.P."/>
            <person name="Benito M.-I."/>
            <person name="Town C.D."/>
            <person name="Fujii C.Y."/>
            <person name="Mason T.M."/>
            <person name="Bowman C.L."/>
            <person name="Barnstead M.E."/>
            <person name="Feldblyum T.V."/>
            <person name="Buell C.R."/>
            <person name="Ketchum K.A."/>
            <person name="Lee J.J."/>
            <person name="Ronning C.M."/>
            <person name="Koo H.L."/>
            <person name="Moffat K.S."/>
            <person name="Cronin L.A."/>
            <person name="Shen M."/>
            <person name="Pai G."/>
            <person name="Van Aken S."/>
            <person name="Umayam L."/>
            <person name="Tallon L.J."/>
            <person name="Gill J.E."/>
            <person name="Adams M.D."/>
            <person name="Carrera A.J."/>
            <person name="Creasy T.H."/>
            <person name="Goodman H.M."/>
            <person name="Somerville C.R."/>
            <person name="Copenhaver G.P."/>
            <person name="Preuss D."/>
            <person name="Nierman W.C."/>
            <person name="White O."/>
            <person name="Eisen J.A."/>
            <person name="Salzberg S.L."/>
            <person name="Fraser C.M."/>
            <person name="Venter J.C."/>
        </authorList>
    </citation>
    <scope>NUCLEOTIDE SEQUENCE [LARGE SCALE GENOMIC DNA]</scope>
    <source>
        <strain>cv. Columbia</strain>
    </source>
</reference>
<reference key="2">
    <citation type="journal article" date="2017" name="Plant J.">
        <title>Araport11: a complete reannotation of the Arabidopsis thaliana reference genome.</title>
        <authorList>
            <person name="Cheng C.Y."/>
            <person name="Krishnakumar V."/>
            <person name="Chan A.P."/>
            <person name="Thibaud-Nissen F."/>
            <person name="Schobel S."/>
            <person name="Town C.D."/>
        </authorList>
    </citation>
    <scope>GENOME REANNOTATION</scope>
    <source>
        <strain>cv. Columbia</strain>
    </source>
</reference>
<reference key="3">
    <citation type="submission" date="2004-09" db="EMBL/GenBank/DDBJ databases">
        <title>Large-scale analysis of RIKEN Arabidopsis full-length (RAFL) cDNAs.</title>
        <authorList>
            <person name="Totoki Y."/>
            <person name="Seki M."/>
            <person name="Ishida J."/>
            <person name="Nakajima M."/>
            <person name="Enju A."/>
            <person name="Kamiya A."/>
            <person name="Narusaka M."/>
            <person name="Shin-i T."/>
            <person name="Nakagawa M."/>
            <person name="Sakamoto N."/>
            <person name="Oishi K."/>
            <person name="Kohara Y."/>
            <person name="Kobayashi M."/>
            <person name="Toyoda A."/>
            <person name="Sakaki Y."/>
            <person name="Sakurai T."/>
            <person name="Iida K."/>
            <person name="Akiyama K."/>
            <person name="Satou M."/>
            <person name="Toyoda T."/>
            <person name="Konagaya A."/>
            <person name="Carninci P."/>
            <person name="Kawai J."/>
            <person name="Hayashizaki Y."/>
            <person name="Shinozaki K."/>
        </authorList>
    </citation>
    <scope>NUCLEOTIDE SEQUENCE [LARGE SCALE MRNA]</scope>
    <source>
        <strain>cv. Columbia</strain>
    </source>
</reference>
<name>HA22F_ARATH</name>
<protein>
    <recommendedName>
        <fullName>HVA22-like protein f</fullName>
        <shortName>AtHVA22f</shortName>
    </recommendedName>
</protein>
<accession>Q682H0</accession>
<accession>Q9SJH4</accession>
<organism>
    <name type="scientific">Arabidopsis thaliana</name>
    <name type="common">Mouse-ear cress</name>
    <dbReference type="NCBI Taxonomy" id="3702"/>
    <lineage>
        <taxon>Eukaryota</taxon>
        <taxon>Viridiplantae</taxon>
        <taxon>Streptophyta</taxon>
        <taxon>Embryophyta</taxon>
        <taxon>Tracheophyta</taxon>
        <taxon>Spermatophyta</taxon>
        <taxon>Magnoliopsida</taxon>
        <taxon>eudicotyledons</taxon>
        <taxon>Gunneridae</taxon>
        <taxon>Pentapetalae</taxon>
        <taxon>rosids</taxon>
        <taxon>malvids</taxon>
        <taxon>Brassicales</taxon>
        <taxon>Brassicaceae</taxon>
        <taxon>Camelineae</taxon>
        <taxon>Arabidopsis</taxon>
    </lineage>
</organism>
<gene>
    <name type="primary">HVA22F</name>
    <name type="ordered locus">At2g42820</name>
    <name type="ORF">F7D19.18</name>
</gene>
<proteinExistence type="evidence at transcript level"/>
<comment type="subcellular location">
    <subcellularLocation>
        <location evidence="2">Membrane</location>
        <topology evidence="2">Multi-pass membrane protein</topology>
    </subcellularLocation>
</comment>
<comment type="similarity">
    <text evidence="2">Belongs to the DP1 family.</text>
</comment>
<comment type="sequence caution" evidence="2">
    <conflict type="erroneous gene model prediction">
        <sequence resource="EMBL-CDS" id="AAD21726"/>
    </conflict>
</comment>
<sequence>MGFIIAIAKRFDALVGPGVMLLYPLYASFRAIESPTMLDDQQWLTYWIIYSLITIFELSVWRVLAWLPFWPYLKLLFCMWLVLPMFSGAAYIYSNFVRQYVKIGMNVGGGTNYTDEQRRVLQMMSLDARKSVQDYVDRFGWDSVEKAIKAAEKETRKH</sequence>
<dbReference type="EMBL" id="AC006931">
    <property type="protein sequence ID" value="AAD21726.1"/>
    <property type="status" value="ALT_SEQ"/>
    <property type="molecule type" value="Genomic_DNA"/>
</dbReference>
<dbReference type="EMBL" id="CP002685">
    <property type="protein sequence ID" value="AEC10173.1"/>
    <property type="molecule type" value="Genomic_DNA"/>
</dbReference>
<dbReference type="EMBL" id="AK175397">
    <property type="protein sequence ID" value="BAD43160.1"/>
    <property type="molecule type" value="mRNA"/>
</dbReference>
<dbReference type="PIR" id="F84858">
    <property type="entry name" value="F84858"/>
</dbReference>
<dbReference type="RefSeq" id="NP_181810.2">
    <property type="nucleotide sequence ID" value="NM_129843.3"/>
</dbReference>
<dbReference type="SMR" id="Q682H0"/>
<dbReference type="FunCoup" id="Q682H0">
    <property type="interactions" value="547"/>
</dbReference>
<dbReference type="STRING" id="3702.Q682H0"/>
<dbReference type="PaxDb" id="3702-AT2G42820.1"/>
<dbReference type="ProteomicsDB" id="230182"/>
<dbReference type="EnsemblPlants" id="AT2G42820.1">
    <property type="protein sequence ID" value="AT2G42820.1"/>
    <property type="gene ID" value="AT2G42820"/>
</dbReference>
<dbReference type="GeneID" id="818882"/>
<dbReference type="Gramene" id="AT2G42820.1">
    <property type="protein sequence ID" value="AT2G42820.1"/>
    <property type="gene ID" value="AT2G42820"/>
</dbReference>
<dbReference type="KEGG" id="ath:AT2G42820"/>
<dbReference type="Araport" id="AT2G42820"/>
<dbReference type="TAIR" id="AT2G42820">
    <property type="gene designation" value="HVA22F"/>
</dbReference>
<dbReference type="eggNOG" id="KOG1725">
    <property type="taxonomic scope" value="Eukaryota"/>
</dbReference>
<dbReference type="HOGENOM" id="CLU_098452_0_2_1"/>
<dbReference type="InParanoid" id="Q682H0"/>
<dbReference type="OMA" id="YCSVRAI"/>
<dbReference type="OrthoDB" id="10009287at2759"/>
<dbReference type="PhylomeDB" id="Q682H0"/>
<dbReference type="PRO" id="PR:Q682H0"/>
<dbReference type="Proteomes" id="UP000006548">
    <property type="component" value="Chromosome 2"/>
</dbReference>
<dbReference type="ExpressionAtlas" id="Q682H0">
    <property type="expression patterns" value="baseline and differential"/>
</dbReference>
<dbReference type="GO" id="GO:0016020">
    <property type="term" value="C:membrane"/>
    <property type="evidence" value="ECO:0007669"/>
    <property type="project" value="UniProtKB-SubCell"/>
</dbReference>
<dbReference type="InterPro" id="IPR004345">
    <property type="entry name" value="TB2_DP1_HVA22"/>
</dbReference>
<dbReference type="PANTHER" id="PTHR12300:SF99">
    <property type="entry name" value="HVA22-LIKE PROTEIN F"/>
    <property type="match status" value="1"/>
</dbReference>
<dbReference type="PANTHER" id="PTHR12300">
    <property type="entry name" value="HVA22-LIKE PROTEINS"/>
    <property type="match status" value="1"/>
</dbReference>
<dbReference type="Pfam" id="PF03134">
    <property type="entry name" value="TB2_DP1_HVA22"/>
    <property type="match status" value="1"/>
</dbReference>
<evidence type="ECO:0000255" key="1"/>
<evidence type="ECO:0000305" key="2"/>
<keyword id="KW-0472">Membrane</keyword>
<keyword id="KW-1185">Reference proteome</keyword>
<keyword id="KW-0812">Transmembrane</keyword>
<keyword id="KW-1133">Transmembrane helix</keyword>